<comment type="function">
    <text evidence="1">Catalyzes the acyloin condensation reaction between C atoms 2 and 3 of pyruvate and glyceraldehyde 3-phosphate to yield 1-deoxy-D-xylulose-5-phosphate (DXP).</text>
</comment>
<comment type="catalytic activity">
    <reaction evidence="1">
        <text>D-glyceraldehyde 3-phosphate + pyruvate + H(+) = 1-deoxy-D-xylulose 5-phosphate + CO2</text>
        <dbReference type="Rhea" id="RHEA:12605"/>
        <dbReference type="ChEBI" id="CHEBI:15361"/>
        <dbReference type="ChEBI" id="CHEBI:15378"/>
        <dbReference type="ChEBI" id="CHEBI:16526"/>
        <dbReference type="ChEBI" id="CHEBI:57792"/>
        <dbReference type="ChEBI" id="CHEBI:59776"/>
        <dbReference type="EC" id="2.2.1.7"/>
    </reaction>
</comment>
<comment type="cofactor">
    <cofactor evidence="1">
        <name>Mg(2+)</name>
        <dbReference type="ChEBI" id="CHEBI:18420"/>
    </cofactor>
    <text evidence="1">Binds 1 Mg(2+) ion per subunit.</text>
</comment>
<comment type="cofactor">
    <cofactor evidence="1">
        <name>thiamine diphosphate</name>
        <dbReference type="ChEBI" id="CHEBI:58937"/>
    </cofactor>
    <text evidence="1">Binds 1 thiamine pyrophosphate per subunit.</text>
</comment>
<comment type="pathway">
    <text evidence="1">Metabolic intermediate biosynthesis; 1-deoxy-D-xylulose 5-phosphate biosynthesis; 1-deoxy-D-xylulose 5-phosphate from D-glyceraldehyde 3-phosphate and pyruvate: step 1/1.</text>
</comment>
<comment type="subunit">
    <text evidence="1">Homodimer.</text>
</comment>
<comment type="similarity">
    <text evidence="1">Belongs to the transketolase family. DXPS subfamily.</text>
</comment>
<accession>B3H050</accession>
<keyword id="KW-0414">Isoprene biosynthesis</keyword>
<keyword id="KW-0460">Magnesium</keyword>
<keyword id="KW-0479">Metal-binding</keyword>
<keyword id="KW-0784">Thiamine biosynthesis</keyword>
<keyword id="KW-0786">Thiamine pyrophosphate</keyword>
<keyword id="KW-0808">Transferase</keyword>
<gene>
    <name evidence="1" type="primary">dxs</name>
    <name type="ordered locus">APP7_0210</name>
</gene>
<proteinExistence type="inferred from homology"/>
<protein>
    <recommendedName>
        <fullName evidence="1">1-deoxy-D-xylulose-5-phosphate synthase</fullName>
        <ecNumber evidence="1">2.2.1.7</ecNumber>
    </recommendedName>
    <alternativeName>
        <fullName evidence="1">1-deoxyxylulose-5-phosphate synthase</fullName>
        <shortName evidence="1">DXP synthase</shortName>
        <shortName evidence="1">DXPS</shortName>
    </alternativeName>
</protein>
<sequence>MQNKYPLLSQINSPEDLRLLAKEQLQSVADELRAYLLESVSQTSGHLASGLGVVELTVALHYVYQTPFDQLIWDVGHQAYPHKILTGRRDQMHTIRQKNGIHPFPWREESLYDVLSVGHSSTSISAGVGIAVAAEKENAGRKTVCVIGDGAITAGMAFEAMNHAGALHTDMLVILNDNEMSISENVGALNNHLARIFSGSIYTTVRDGSKKVLDKVPTIKNFMKKSEEHMKGVISPESTLFEELGFNYIGPIDGHNIDELVKTLSNMRELKGPQFLHIRTKKGKGYEPAENDPIGYHGVPKFDPTCGQLPKSKTIPTYSDIFGNWLCEMAEQDSKLIGITPAMREGSGMVEFSKRFPEQYFDVAIAEQHAVTFGAGLAIAGYKPVVAIYSSFLQRAYDQLIHDVAIQNLPVIFAIDRAGIVGADGQTHQGAFDVSFMRCIPNMTIMCPSDENEMRQMLYTAYRMNTPTAVRYPRGNAQGVALAPMQALEVGKGKLIQQGQKVAILNFGPLLNEARIVAEKHNYTLADMRFVKPLDEQLVAELADSHELLVTLEENAIQGGAGSAVNEYLQKIGKIRPLVMLGIPDFFVPQATQAESYADLGLDAAGIEQRIQAVVNQ</sequence>
<reference key="1">
    <citation type="submission" date="2008-06" db="EMBL/GenBank/DDBJ databases">
        <title>Genome and proteome analysis of A. pleuropneumoniae serotype 7.</title>
        <authorList>
            <person name="Linke B."/>
            <person name="Buettner F."/>
            <person name="Martinez-Arias R."/>
            <person name="Goesmann A."/>
            <person name="Baltes N."/>
            <person name="Tegetmeyer H."/>
            <person name="Singh M."/>
            <person name="Gerlach G.F."/>
        </authorList>
    </citation>
    <scope>NUCLEOTIDE SEQUENCE [LARGE SCALE GENOMIC DNA]</scope>
    <source>
        <strain>AP76</strain>
    </source>
</reference>
<dbReference type="EC" id="2.2.1.7" evidence="1"/>
<dbReference type="EMBL" id="CP001091">
    <property type="protein sequence ID" value="ACE60862.1"/>
    <property type="molecule type" value="Genomic_DNA"/>
</dbReference>
<dbReference type="RefSeq" id="WP_005595991.1">
    <property type="nucleotide sequence ID" value="NC_010939.1"/>
</dbReference>
<dbReference type="SMR" id="B3H050"/>
<dbReference type="GeneID" id="48598354"/>
<dbReference type="KEGG" id="apa:APP7_0210"/>
<dbReference type="HOGENOM" id="CLU_009227_1_4_6"/>
<dbReference type="UniPathway" id="UPA00064">
    <property type="reaction ID" value="UER00091"/>
</dbReference>
<dbReference type="Proteomes" id="UP000001226">
    <property type="component" value="Chromosome"/>
</dbReference>
<dbReference type="GO" id="GO:0005829">
    <property type="term" value="C:cytosol"/>
    <property type="evidence" value="ECO:0007669"/>
    <property type="project" value="TreeGrafter"/>
</dbReference>
<dbReference type="GO" id="GO:0008661">
    <property type="term" value="F:1-deoxy-D-xylulose-5-phosphate synthase activity"/>
    <property type="evidence" value="ECO:0007669"/>
    <property type="project" value="UniProtKB-UniRule"/>
</dbReference>
<dbReference type="GO" id="GO:0000287">
    <property type="term" value="F:magnesium ion binding"/>
    <property type="evidence" value="ECO:0007669"/>
    <property type="project" value="UniProtKB-UniRule"/>
</dbReference>
<dbReference type="GO" id="GO:0030976">
    <property type="term" value="F:thiamine pyrophosphate binding"/>
    <property type="evidence" value="ECO:0007669"/>
    <property type="project" value="UniProtKB-UniRule"/>
</dbReference>
<dbReference type="GO" id="GO:0052865">
    <property type="term" value="P:1-deoxy-D-xylulose 5-phosphate biosynthetic process"/>
    <property type="evidence" value="ECO:0007669"/>
    <property type="project" value="UniProtKB-UniPathway"/>
</dbReference>
<dbReference type="GO" id="GO:0019288">
    <property type="term" value="P:isopentenyl diphosphate biosynthetic process, methylerythritol 4-phosphate pathway"/>
    <property type="evidence" value="ECO:0007669"/>
    <property type="project" value="TreeGrafter"/>
</dbReference>
<dbReference type="GO" id="GO:0016114">
    <property type="term" value="P:terpenoid biosynthetic process"/>
    <property type="evidence" value="ECO:0007669"/>
    <property type="project" value="UniProtKB-UniRule"/>
</dbReference>
<dbReference type="GO" id="GO:0009228">
    <property type="term" value="P:thiamine biosynthetic process"/>
    <property type="evidence" value="ECO:0007669"/>
    <property type="project" value="UniProtKB-UniRule"/>
</dbReference>
<dbReference type="CDD" id="cd02007">
    <property type="entry name" value="TPP_DXS"/>
    <property type="match status" value="1"/>
</dbReference>
<dbReference type="CDD" id="cd07033">
    <property type="entry name" value="TPP_PYR_DXS_TK_like"/>
    <property type="match status" value="1"/>
</dbReference>
<dbReference type="FunFam" id="3.40.50.920:FF:000002">
    <property type="entry name" value="1-deoxy-D-xylulose-5-phosphate synthase"/>
    <property type="match status" value="1"/>
</dbReference>
<dbReference type="FunFam" id="3.40.50.970:FF:000005">
    <property type="entry name" value="1-deoxy-D-xylulose-5-phosphate synthase"/>
    <property type="match status" value="1"/>
</dbReference>
<dbReference type="Gene3D" id="3.40.50.920">
    <property type="match status" value="1"/>
</dbReference>
<dbReference type="Gene3D" id="3.40.50.970">
    <property type="match status" value="2"/>
</dbReference>
<dbReference type="HAMAP" id="MF_00315">
    <property type="entry name" value="DXP_synth"/>
    <property type="match status" value="1"/>
</dbReference>
<dbReference type="InterPro" id="IPR005477">
    <property type="entry name" value="Dxylulose-5-P_synthase"/>
</dbReference>
<dbReference type="InterPro" id="IPR029061">
    <property type="entry name" value="THDP-binding"/>
</dbReference>
<dbReference type="InterPro" id="IPR009014">
    <property type="entry name" value="Transketo_C/PFOR_II"/>
</dbReference>
<dbReference type="InterPro" id="IPR005475">
    <property type="entry name" value="Transketolase-like_Pyr-bd"/>
</dbReference>
<dbReference type="InterPro" id="IPR020826">
    <property type="entry name" value="Transketolase_BS"/>
</dbReference>
<dbReference type="InterPro" id="IPR033248">
    <property type="entry name" value="Transketolase_C"/>
</dbReference>
<dbReference type="InterPro" id="IPR049557">
    <property type="entry name" value="Transketolase_CS"/>
</dbReference>
<dbReference type="NCBIfam" id="TIGR00204">
    <property type="entry name" value="dxs"/>
    <property type="match status" value="1"/>
</dbReference>
<dbReference type="NCBIfam" id="NF003933">
    <property type="entry name" value="PRK05444.2-2"/>
    <property type="match status" value="1"/>
</dbReference>
<dbReference type="PANTHER" id="PTHR43322">
    <property type="entry name" value="1-D-DEOXYXYLULOSE 5-PHOSPHATE SYNTHASE-RELATED"/>
    <property type="match status" value="1"/>
</dbReference>
<dbReference type="PANTHER" id="PTHR43322:SF5">
    <property type="entry name" value="1-DEOXY-D-XYLULOSE-5-PHOSPHATE SYNTHASE, CHLOROPLASTIC"/>
    <property type="match status" value="1"/>
</dbReference>
<dbReference type="Pfam" id="PF13292">
    <property type="entry name" value="DXP_synthase_N"/>
    <property type="match status" value="1"/>
</dbReference>
<dbReference type="Pfam" id="PF02779">
    <property type="entry name" value="Transket_pyr"/>
    <property type="match status" value="1"/>
</dbReference>
<dbReference type="Pfam" id="PF02780">
    <property type="entry name" value="Transketolase_C"/>
    <property type="match status" value="1"/>
</dbReference>
<dbReference type="SMART" id="SM00861">
    <property type="entry name" value="Transket_pyr"/>
    <property type="match status" value="1"/>
</dbReference>
<dbReference type="SUPFAM" id="SSF52518">
    <property type="entry name" value="Thiamin diphosphate-binding fold (THDP-binding)"/>
    <property type="match status" value="2"/>
</dbReference>
<dbReference type="SUPFAM" id="SSF52922">
    <property type="entry name" value="TK C-terminal domain-like"/>
    <property type="match status" value="1"/>
</dbReference>
<dbReference type="PROSITE" id="PS00801">
    <property type="entry name" value="TRANSKETOLASE_1"/>
    <property type="match status" value="1"/>
</dbReference>
<dbReference type="PROSITE" id="PS00802">
    <property type="entry name" value="TRANSKETOLASE_2"/>
    <property type="match status" value="1"/>
</dbReference>
<feature type="chain" id="PRO_1000115715" description="1-deoxy-D-xylulose-5-phosphate synthase">
    <location>
        <begin position="1"/>
        <end position="617"/>
    </location>
</feature>
<feature type="binding site" evidence="1">
    <location>
        <position position="77"/>
    </location>
    <ligand>
        <name>thiamine diphosphate</name>
        <dbReference type="ChEBI" id="CHEBI:58937"/>
    </ligand>
</feature>
<feature type="binding site" evidence="1">
    <location>
        <begin position="118"/>
        <end position="120"/>
    </location>
    <ligand>
        <name>thiamine diphosphate</name>
        <dbReference type="ChEBI" id="CHEBI:58937"/>
    </ligand>
</feature>
<feature type="binding site" evidence="1">
    <location>
        <position position="149"/>
    </location>
    <ligand>
        <name>Mg(2+)</name>
        <dbReference type="ChEBI" id="CHEBI:18420"/>
    </ligand>
</feature>
<feature type="binding site" evidence="1">
    <location>
        <begin position="150"/>
        <end position="151"/>
    </location>
    <ligand>
        <name>thiamine diphosphate</name>
        <dbReference type="ChEBI" id="CHEBI:58937"/>
    </ligand>
</feature>
<feature type="binding site" evidence="1">
    <location>
        <position position="178"/>
    </location>
    <ligand>
        <name>Mg(2+)</name>
        <dbReference type="ChEBI" id="CHEBI:18420"/>
    </ligand>
</feature>
<feature type="binding site" evidence="1">
    <location>
        <position position="178"/>
    </location>
    <ligand>
        <name>thiamine diphosphate</name>
        <dbReference type="ChEBI" id="CHEBI:58937"/>
    </ligand>
</feature>
<feature type="binding site" evidence="1">
    <location>
        <position position="286"/>
    </location>
    <ligand>
        <name>thiamine diphosphate</name>
        <dbReference type="ChEBI" id="CHEBI:58937"/>
    </ligand>
</feature>
<feature type="binding site" evidence="1">
    <location>
        <position position="367"/>
    </location>
    <ligand>
        <name>thiamine diphosphate</name>
        <dbReference type="ChEBI" id="CHEBI:58937"/>
    </ligand>
</feature>
<name>DXS_ACTP7</name>
<evidence type="ECO:0000255" key="1">
    <source>
        <dbReference type="HAMAP-Rule" id="MF_00315"/>
    </source>
</evidence>
<organism>
    <name type="scientific">Actinobacillus pleuropneumoniae serotype 7 (strain AP76)</name>
    <dbReference type="NCBI Taxonomy" id="537457"/>
    <lineage>
        <taxon>Bacteria</taxon>
        <taxon>Pseudomonadati</taxon>
        <taxon>Pseudomonadota</taxon>
        <taxon>Gammaproteobacteria</taxon>
        <taxon>Pasteurellales</taxon>
        <taxon>Pasteurellaceae</taxon>
        <taxon>Actinobacillus</taxon>
    </lineage>
</organism>